<feature type="chain" id="PRO_1000212372" description="UDP-N-acetylmuramoylalanine--D-glutamate ligase">
    <location>
        <begin position="1"/>
        <end position="452"/>
    </location>
</feature>
<feature type="binding site" evidence="1">
    <location>
        <begin position="115"/>
        <end position="121"/>
    </location>
    <ligand>
        <name>ATP</name>
        <dbReference type="ChEBI" id="CHEBI:30616"/>
    </ligand>
</feature>
<name>MURD_GEOSM</name>
<organism>
    <name type="scientific">Geobacter sp. (strain M21)</name>
    <dbReference type="NCBI Taxonomy" id="443144"/>
    <lineage>
        <taxon>Bacteria</taxon>
        <taxon>Pseudomonadati</taxon>
        <taxon>Thermodesulfobacteriota</taxon>
        <taxon>Desulfuromonadia</taxon>
        <taxon>Geobacterales</taxon>
        <taxon>Geobacteraceae</taxon>
        <taxon>Geobacter</taxon>
    </lineage>
</organism>
<comment type="function">
    <text evidence="1">Cell wall formation. Catalyzes the addition of glutamate to the nucleotide precursor UDP-N-acetylmuramoyl-L-alanine (UMA).</text>
</comment>
<comment type="catalytic activity">
    <reaction evidence="1">
        <text>UDP-N-acetyl-alpha-D-muramoyl-L-alanine + D-glutamate + ATP = UDP-N-acetyl-alpha-D-muramoyl-L-alanyl-D-glutamate + ADP + phosphate + H(+)</text>
        <dbReference type="Rhea" id="RHEA:16429"/>
        <dbReference type="ChEBI" id="CHEBI:15378"/>
        <dbReference type="ChEBI" id="CHEBI:29986"/>
        <dbReference type="ChEBI" id="CHEBI:30616"/>
        <dbReference type="ChEBI" id="CHEBI:43474"/>
        <dbReference type="ChEBI" id="CHEBI:83898"/>
        <dbReference type="ChEBI" id="CHEBI:83900"/>
        <dbReference type="ChEBI" id="CHEBI:456216"/>
        <dbReference type="EC" id="6.3.2.9"/>
    </reaction>
</comment>
<comment type="pathway">
    <text evidence="1">Cell wall biogenesis; peptidoglycan biosynthesis.</text>
</comment>
<comment type="subcellular location">
    <subcellularLocation>
        <location evidence="1">Cytoplasm</location>
    </subcellularLocation>
</comment>
<comment type="similarity">
    <text evidence="1">Belongs to the MurCDEF family.</text>
</comment>
<accession>C6DZK4</accession>
<evidence type="ECO:0000255" key="1">
    <source>
        <dbReference type="HAMAP-Rule" id="MF_00639"/>
    </source>
</evidence>
<gene>
    <name evidence="1" type="primary">murD</name>
    <name type="ordered locus">GM21_0506</name>
</gene>
<dbReference type="EC" id="6.3.2.9" evidence="1"/>
<dbReference type="EMBL" id="CP001661">
    <property type="protein sequence ID" value="ACT16586.1"/>
    <property type="molecule type" value="Genomic_DNA"/>
</dbReference>
<dbReference type="SMR" id="C6DZK4"/>
<dbReference type="STRING" id="443144.GM21_0506"/>
<dbReference type="KEGG" id="gem:GM21_0506"/>
<dbReference type="eggNOG" id="COG0771">
    <property type="taxonomic scope" value="Bacteria"/>
</dbReference>
<dbReference type="HOGENOM" id="CLU_032540_0_0_7"/>
<dbReference type="OrthoDB" id="9809796at2"/>
<dbReference type="UniPathway" id="UPA00219"/>
<dbReference type="GO" id="GO:0005737">
    <property type="term" value="C:cytoplasm"/>
    <property type="evidence" value="ECO:0007669"/>
    <property type="project" value="UniProtKB-SubCell"/>
</dbReference>
<dbReference type="GO" id="GO:0005524">
    <property type="term" value="F:ATP binding"/>
    <property type="evidence" value="ECO:0007669"/>
    <property type="project" value="UniProtKB-UniRule"/>
</dbReference>
<dbReference type="GO" id="GO:0008764">
    <property type="term" value="F:UDP-N-acetylmuramoylalanine-D-glutamate ligase activity"/>
    <property type="evidence" value="ECO:0007669"/>
    <property type="project" value="UniProtKB-UniRule"/>
</dbReference>
<dbReference type="GO" id="GO:0051301">
    <property type="term" value="P:cell division"/>
    <property type="evidence" value="ECO:0007669"/>
    <property type="project" value="UniProtKB-KW"/>
</dbReference>
<dbReference type="GO" id="GO:0071555">
    <property type="term" value="P:cell wall organization"/>
    <property type="evidence" value="ECO:0007669"/>
    <property type="project" value="UniProtKB-KW"/>
</dbReference>
<dbReference type="GO" id="GO:0009252">
    <property type="term" value="P:peptidoglycan biosynthetic process"/>
    <property type="evidence" value="ECO:0007669"/>
    <property type="project" value="UniProtKB-UniRule"/>
</dbReference>
<dbReference type="GO" id="GO:0008360">
    <property type="term" value="P:regulation of cell shape"/>
    <property type="evidence" value="ECO:0007669"/>
    <property type="project" value="UniProtKB-KW"/>
</dbReference>
<dbReference type="Gene3D" id="3.90.190.20">
    <property type="entry name" value="Mur ligase, C-terminal domain"/>
    <property type="match status" value="1"/>
</dbReference>
<dbReference type="Gene3D" id="3.40.1190.10">
    <property type="entry name" value="Mur-like, catalytic domain"/>
    <property type="match status" value="1"/>
</dbReference>
<dbReference type="Gene3D" id="3.40.50.720">
    <property type="entry name" value="NAD(P)-binding Rossmann-like Domain"/>
    <property type="match status" value="1"/>
</dbReference>
<dbReference type="HAMAP" id="MF_00639">
    <property type="entry name" value="MurD"/>
    <property type="match status" value="1"/>
</dbReference>
<dbReference type="InterPro" id="IPR036565">
    <property type="entry name" value="Mur-like_cat_sf"/>
</dbReference>
<dbReference type="InterPro" id="IPR004101">
    <property type="entry name" value="Mur_ligase_C"/>
</dbReference>
<dbReference type="InterPro" id="IPR036615">
    <property type="entry name" value="Mur_ligase_C_dom_sf"/>
</dbReference>
<dbReference type="InterPro" id="IPR013221">
    <property type="entry name" value="Mur_ligase_cen"/>
</dbReference>
<dbReference type="InterPro" id="IPR005762">
    <property type="entry name" value="MurD"/>
</dbReference>
<dbReference type="NCBIfam" id="TIGR01087">
    <property type="entry name" value="murD"/>
    <property type="match status" value="1"/>
</dbReference>
<dbReference type="PANTHER" id="PTHR43692">
    <property type="entry name" value="UDP-N-ACETYLMURAMOYLALANINE--D-GLUTAMATE LIGASE"/>
    <property type="match status" value="1"/>
</dbReference>
<dbReference type="PANTHER" id="PTHR43692:SF1">
    <property type="entry name" value="UDP-N-ACETYLMURAMOYLALANINE--D-GLUTAMATE LIGASE"/>
    <property type="match status" value="1"/>
</dbReference>
<dbReference type="Pfam" id="PF02875">
    <property type="entry name" value="Mur_ligase_C"/>
    <property type="match status" value="1"/>
</dbReference>
<dbReference type="Pfam" id="PF08245">
    <property type="entry name" value="Mur_ligase_M"/>
    <property type="match status" value="1"/>
</dbReference>
<dbReference type="Pfam" id="PF21799">
    <property type="entry name" value="MurD-like_N"/>
    <property type="match status" value="1"/>
</dbReference>
<dbReference type="SUPFAM" id="SSF51984">
    <property type="entry name" value="MurCD N-terminal domain"/>
    <property type="match status" value="1"/>
</dbReference>
<dbReference type="SUPFAM" id="SSF53623">
    <property type="entry name" value="MurD-like peptide ligases, catalytic domain"/>
    <property type="match status" value="1"/>
</dbReference>
<dbReference type="SUPFAM" id="SSF53244">
    <property type="entry name" value="MurD-like peptide ligases, peptide-binding domain"/>
    <property type="match status" value="1"/>
</dbReference>
<proteinExistence type="inferred from homology"/>
<reference key="1">
    <citation type="submission" date="2009-07" db="EMBL/GenBank/DDBJ databases">
        <title>Complete sequence of Geobacter sp. M21.</title>
        <authorList>
            <consortium name="US DOE Joint Genome Institute"/>
            <person name="Lucas S."/>
            <person name="Copeland A."/>
            <person name="Lapidus A."/>
            <person name="Glavina del Rio T."/>
            <person name="Dalin E."/>
            <person name="Tice H."/>
            <person name="Bruce D."/>
            <person name="Goodwin L."/>
            <person name="Pitluck S."/>
            <person name="Saunders E."/>
            <person name="Brettin T."/>
            <person name="Detter J.C."/>
            <person name="Han C."/>
            <person name="Larimer F."/>
            <person name="Land M."/>
            <person name="Hauser L."/>
            <person name="Kyrpides N."/>
            <person name="Ovchinnikova G."/>
            <person name="Lovley D."/>
        </authorList>
    </citation>
    <scope>NUCLEOTIDE SEQUENCE [LARGE SCALE GENOMIC DNA]</scope>
    <source>
        <strain>M21</strain>
    </source>
</reference>
<keyword id="KW-0067">ATP-binding</keyword>
<keyword id="KW-0131">Cell cycle</keyword>
<keyword id="KW-0132">Cell division</keyword>
<keyword id="KW-0133">Cell shape</keyword>
<keyword id="KW-0961">Cell wall biogenesis/degradation</keyword>
<keyword id="KW-0963">Cytoplasm</keyword>
<keyword id="KW-0436">Ligase</keyword>
<keyword id="KW-0547">Nucleotide-binding</keyword>
<keyword id="KW-0573">Peptidoglycan synthesis</keyword>
<sequence>MELKNKKILVVGLAKTGVAVARFLAKAGAFVTVTDMREEEALADVLAELSDLDITYELGRHVPYSFLMADLIVVSPGVPMDIKPLEMARSQKRRVVSEVELASWFIKAPMVAITGTNGKTTTTTLTGEIFKACGFETFVGGNIGNPLIELAESGQEVARVVVELSSFQLEGVESFRPDVAVLLNITEDHLDRYHSFQEYIDAKLRIFENQTADDFAVLNIDDPLVAACASKLKAQLFPMSRLHELEEGISYRDGFITFSHKGKVLRFGTEGFKLKGVHNLDNIMASLASTLLMRCDGDCAYEAVKSFKGLPHRMELVEEIDGVAYYEDSKGTNVGSVVKSLESFDSGITLIAGGKDKGGSYEPLAPLVESRVSHLVLIGEAKARMQQALGSLTDTHEAQTLEEAVEIARRLTKPGGVVLFSPACSSFDMFKNYEERAERFKAAVRAGKKGEA</sequence>
<protein>
    <recommendedName>
        <fullName evidence="1">UDP-N-acetylmuramoylalanine--D-glutamate ligase</fullName>
        <ecNumber evidence="1">6.3.2.9</ecNumber>
    </recommendedName>
    <alternativeName>
        <fullName evidence="1">D-glutamic acid-adding enzyme</fullName>
    </alternativeName>
    <alternativeName>
        <fullName evidence="1">UDP-N-acetylmuramoyl-L-alanyl-D-glutamate synthetase</fullName>
    </alternativeName>
</protein>